<proteinExistence type="inferred from homology"/>
<organism>
    <name type="scientific">Bordetella parapertussis (strain 12822 / ATCC BAA-587 / NCTC 13253)</name>
    <dbReference type="NCBI Taxonomy" id="257311"/>
    <lineage>
        <taxon>Bacteria</taxon>
        <taxon>Pseudomonadati</taxon>
        <taxon>Pseudomonadota</taxon>
        <taxon>Betaproteobacteria</taxon>
        <taxon>Burkholderiales</taxon>
        <taxon>Alcaligenaceae</taxon>
        <taxon>Bordetella</taxon>
    </lineage>
</organism>
<keyword id="KW-0068">Autocatalytic cleavage</keyword>
<keyword id="KW-0963">Cytoplasm</keyword>
<keyword id="KW-0210">Decarboxylase</keyword>
<keyword id="KW-0456">Lyase</keyword>
<keyword id="KW-0566">Pantothenate biosynthesis</keyword>
<keyword id="KW-0670">Pyruvate</keyword>
<keyword id="KW-0704">Schiff base</keyword>
<keyword id="KW-0865">Zymogen</keyword>
<sequence length="122" mass="13579">MQRIMLRAKLHRVTVTEADLHYEGSCGIDEDLLDAAGMREFERIELYNVTNGERFDTYIIKAARGSGAISLNGAAARRAQVGDLLIICTYGPMSEEQSATHKPQVVLVDDANRVKEIRKFPA</sequence>
<reference key="1">
    <citation type="journal article" date="2003" name="Nat. Genet.">
        <title>Comparative analysis of the genome sequences of Bordetella pertussis, Bordetella parapertussis and Bordetella bronchiseptica.</title>
        <authorList>
            <person name="Parkhill J."/>
            <person name="Sebaihia M."/>
            <person name="Preston A."/>
            <person name="Murphy L.D."/>
            <person name="Thomson N.R."/>
            <person name="Harris D.E."/>
            <person name="Holden M.T.G."/>
            <person name="Churcher C.M."/>
            <person name="Bentley S.D."/>
            <person name="Mungall K.L."/>
            <person name="Cerdeno-Tarraga A.-M."/>
            <person name="Temple L."/>
            <person name="James K.D."/>
            <person name="Harris B."/>
            <person name="Quail M.A."/>
            <person name="Achtman M."/>
            <person name="Atkin R."/>
            <person name="Baker S."/>
            <person name="Basham D."/>
            <person name="Bason N."/>
            <person name="Cherevach I."/>
            <person name="Chillingworth T."/>
            <person name="Collins M."/>
            <person name="Cronin A."/>
            <person name="Davis P."/>
            <person name="Doggett J."/>
            <person name="Feltwell T."/>
            <person name="Goble A."/>
            <person name="Hamlin N."/>
            <person name="Hauser H."/>
            <person name="Holroyd S."/>
            <person name="Jagels K."/>
            <person name="Leather S."/>
            <person name="Moule S."/>
            <person name="Norberczak H."/>
            <person name="O'Neil S."/>
            <person name="Ormond D."/>
            <person name="Price C."/>
            <person name="Rabbinowitsch E."/>
            <person name="Rutter S."/>
            <person name="Sanders M."/>
            <person name="Saunders D."/>
            <person name="Seeger K."/>
            <person name="Sharp S."/>
            <person name="Simmonds M."/>
            <person name="Skelton J."/>
            <person name="Squares R."/>
            <person name="Squares S."/>
            <person name="Stevens K."/>
            <person name="Unwin L."/>
            <person name="Whitehead S."/>
            <person name="Barrell B.G."/>
            <person name="Maskell D.J."/>
        </authorList>
    </citation>
    <scope>NUCLEOTIDE SEQUENCE [LARGE SCALE GENOMIC DNA]</scope>
    <source>
        <strain>12822 / ATCC BAA-587 / NCTC 13253</strain>
    </source>
</reference>
<accession>Q7W972</accession>
<feature type="chain" id="PRO_0000023043" description="Aspartate 1-decarboxylase beta chain" evidence="1">
    <location>
        <begin position="1"/>
        <end position="24"/>
    </location>
</feature>
<feature type="chain" id="PRO_0000023044" description="Aspartate 1-decarboxylase alpha chain" evidence="1">
    <location>
        <begin position="25"/>
        <end position="122"/>
    </location>
</feature>
<feature type="active site" description="Schiff-base intermediate with substrate; via pyruvic acid" evidence="1">
    <location>
        <position position="25"/>
    </location>
</feature>
<feature type="active site" description="Proton donor" evidence="1">
    <location>
        <position position="58"/>
    </location>
</feature>
<feature type="binding site" evidence="1">
    <location>
        <position position="57"/>
    </location>
    <ligand>
        <name>substrate</name>
    </ligand>
</feature>
<feature type="binding site" evidence="1">
    <location>
        <begin position="73"/>
        <end position="75"/>
    </location>
    <ligand>
        <name>substrate</name>
    </ligand>
</feature>
<feature type="modified residue" description="Pyruvic acid (Ser)" evidence="1">
    <location>
        <position position="25"/>
    </location>
</feature>
<dbReference type="EC" id="4.1.1.11" evidence="1"/>
<dbReference type="EMBL" id="BX640428">
    <property type="protein sequence ID" value="CAE37199.1"/>
    <property type="molecule type" value="Genomic_DNA"/>
</dbReference>
<dbReference type="RefSeq" id="WP_003810617.1">
    <property type="nucleotide sequence ID" value="NC_002928.3"/>
</dbReference>
<dbReference type="SMR" id="Q7W972"/>
<dbReference type="GeneID" id="93203668"/>
<dbReference type="KEGG" id="bpa:BPP1899"/>
<dbReference type="HOGENOM" id="CLU_115305_2_1_4"/>
<dbReference type="UniPathway" id="UPA00028">
    <property type="reaction ID" value="UER00002"/>
</dbReference>
<dbReference type="Proteomes" id="UP000001421">
    <property type="component" value="Chromosome"/>
</dbReference>
<dbReference type="GO" id="GO:0005829">
    <property type="term" value="C:cytosol"/>
    <property type="evidence" value="ECO:0007669"/>
    <property type="project" value="TreeGrafter"/>
</dbReference>
<dbReference type="GO" id="GO:0004068">
    <property type="term" value="F:aspartate 1-decarboxylase activity"/>
    <property type="evidence" value="ECO:0007669"/>
    <property type="project" value="UniProtKB-UniRule"/>
</dbReference>
<dbReference type="GO" id="GO:0006523">
    <property type="term" value="P:alanine biosynthetic process"/>
    <property type="evidence" value="ECO:0007669"/>
    <property type="project" value="InterPro"/>
</dbReference>
<dbReference type="GO" id="GO:0015940">
    <property type="term" value="P:pantothenate biosynthetic process"/>
    <property type="evidence" value="ECO:0007669"/>
    <property type="project" value="UniProtKB-UniRule"/>
</dbReference>
<dbReference type="CDD" id="cd06919">
    <property type="entry name" value="Asp_decarbox"/>
    <property type="match status" value="1"/>
</dbReference>
<dbReference type="Gene3D" id="2.40.40.20">
    <property type="match status" value="1"/>
</dbReference>
<dbReference type="HAMAP" id="MF_00446">
    <property type="entry name" value="PanD"/>
    <property type="match status" value="1"/>
</dbReference>
<dbReference type="InterPro" id="IPR009010">
    <property type="entry name" value="Asp_de-COase-like_dom_sf"/>
</dbReference>
<dbReference type="InterPro" id="IPR003190">
    <property type="entry name" value="Asp_decarbox"/>
</dbReference>
<dbReference type="NCBIfam" id="TIGR00223">
    <property type="entry name" value="panD"/>
    <property type="match status" value="1"/>
</dbReference>
<dbReference type="PANTHER" id="PTHR21012">
    <property type="entry name" value="ASPARTATE 1-DECARBOXYLASE"/>
    <property type="match status" value="1"/>
</dbReference>
<dbReference type="PANTHER" id="PTHR21012:SF0">
    <property type="entry name" value="ASPARTATE 1-DECARBOXYLASE"/>
    <property type="match status" value="1"/>
</dbReference>
<dbReference type="Pfam" id="PF02261">
    <property type="entry name" value="Asp_decarbox"/>
    <property type="match status" value="1"/>
</dbReference>
<dbReference type="PIRSF" id="PIRSF006246">
    <property type="entry name" value="Asp_decarbox"/>
    <property type="match status" value="1"/>
</dbReference>
<dbReference type="SUPFAM" id="SSF50692">
    <property type="entry name" value="ADC-like"/>
    <property type="match status" value="1"/>
</dbReference>
<protein>
    <recommendedName>
        <fullName evidence="1">Aspartate 1-decarboxylase</fullName>
        <ecNumber evidence="1">4.1.1.11</ecNumber>
    </recommendedName>
    <alternativeName>
        <fullName evidence="1">Aspartate alpha-decarboxylase</fullName>
    </alternativeName>
    <component>
        <recommendedName>
            <fullName evidence="1">Aspartate 1-decarboxylase beta chain</fullName>
        </recommendedName>
    </component>
    <component>
        <recommendedName>
            <fullName evidence="1">Aspartate 1-decarboxylase alpha chain</fullName>
        </recommendedName>
    </component>
</protein>
<name>PAND_BORPA</name>
<gene>
    <name evidence="1" type="primary">panD</name>
    <name type="ordered locus">BPP1899</name>
</gene>
<evidence type="ECO:0000255" key="1">
    <source>
        <dbReference type="HAMAP-Rule" id="MF_00446"/>
    </source>
</evidence>
<comment type="function">
    <text evidence="1">Catalyzes the pyruvoyl-dependent decarboxylation of aspartate to produce beta-alanine.</text>
</comment>
<comment type="catalytic activity">
    <reaction evidence="1">
        <text>L-aspartate + H(+) = beta-alanine + CO2</text>
        <dbReference type="Rhea" id="RHEA:19497"/>
        <dbReference type="ChEBI" id="CHEBI:15378"/>
        <dbReference type="ChEBI" id="CHEBI:16526"/>
        <dbReference type="ChEBI" id="CHEBI:29991"/>
        <dbReference type="ChEBI" id="CHEBI:57966"/>
        <dbReference type="EC" id="4.1.1.11"/>
    </reaction>
</comment>
<comment type="cofactor">
    <cofactor evidence="1">
        <name>pyruvate</name>
        <dbReference type="ChEBI" id="CHEBI:15361"/>
    </cofactor>
    <text evidence="1">Binds 1 pyruvoyl group covalently per subunit.</text>
</comment>
<comment type="pathway">
    <text evidence="1">Cofactor biosynthesis; (R)-pantothenate biosynthesis; beta-alanine from L-aspartate: step 1/1.</text>
</comment>
<comment type="subunit">
    <text evidence="1">Heterooctamer of four alpha and four beta subunits.</text>
</comment>
<comment type="subcellular location">
    <subcellularLocation>
        <location evidence="1">Cytoplasm</location>
    </subcellularLocation>
</comment>
<comment type="PTM">
    <text evidence="1">Is synthesized initially as an inactive proenzyme, which is activated by self-cleavage at a specific serine bond to produce a beta-subunit with a hydroxyl group at its C-terminus and an alpha-subunit with a pyruvoyl group at its N-terminus.</text>
</comment>
<comment type="similarity">
    <text evidence="1">Belongs to the PanD family.</text>
</comment>